<comment type="function">
    <text evidence="1">Part of the ABC transporter complex NikABCDE involved in nickel import. Responsible for energy coupling to the transport system.</text>
</comment>
<comment type="catalytic activity">
    <reaction evidence="1">
        <text>Ni(2+)(out) + ATP + H2O = Ni(2+)(in) + ADP + phosphate + H(+)</text>
        <dbReference type="Rhea" id="RHEA:15557"/>
        <dbReference type="ChEBI" id="CHEBI:15377"/>
        <dbReference type="ChEBI" id="CHEBI:15378"/>
        <dbReference type="ChEBI" id="CHEBI:30616"/>
        <dbReference type="ChEBI" id="CHEBI:43474"/>
        <dbReference type="ChEBI" id="CHEBI:49786"/>
        <dbReference type="ChEBI" id="CHEBI:456216"/>
        <dbReference type="EC" id="7.2.2.11"/>
    </reaction>
</comment>
<comment type="subunit">
    <text evidence="1">The complex is composed of two ATP-binding proteins (NikD and NikE), two transmembrane proteins (NikB and NikC) and a solute-binding protein (NikA).</text>
</comment>
<comment type="subcellular location">
    <subcellularLocation>
        <location evidence="1">Cell inner membrane</location>
        <topology evidence="1">Peripheral membrane protein</topology>
    </subcellularLocation>
</comment>
<comment type="similarity">
    <text evidence="1">Belongs to the ABC transporter superfamily. Nickel importer (TC 3.A.1.5.3) family.</text>
</comment>
<gene>
    <name evidence="1" type="primary">nikD</name>
    <name type="ordered locus">SF3497</name>
    <name type="ordered locus">S4266</name>
</gene>
<organism>
    <name type="scientific">Shigella flexneri</name>
    <dbReference type="NCBI Taxonomy" id="623"/>
    <lineage>
        <taxon>Bacteria</taxon>
        <taxon>Pseudomonadati</taxon>
        <taxon>Pseudomonadota</taxon>
        <taxon>Gammaproteobacteria</taxon>
        <taxon>Enterobacterales</taxon>
        <taxon>Enterobacteriaceae</taxon>
        <taxon>Shigella</taxon>
    </lineage>
</organism>
<accession>Q83J78</accession>
<accession>Q7BYV8</accession>
<evidence type="ECO:0000255" key="1">
    <source>
        <dbReference type="HAMAP-Rule" id="MF_01711"/>
    </source>
</evidence>
<dbReference type="EC" id="7.2.2.11" evidence="1"/>
<dbReference type="EMBL" id="AE005674">
    <property type="protein sequence ID" value="AAN44956.1"/>
    <property type="molecule type" value="Genomic_DNA"/>
</dbReference>
<dbReference type="EMBL" id="AE014073">
    <property type="protein sequence ID" value="AAP19226.1"/>
    <property type="molecule type" value="Genomic_DNA"/>
</dbReference>
<dbReference type="RefSeq" id="NP_709249.1">
    <property type="nucleotide sequence ID" value="NC_004337.2"/>
</dbReference>
<dbReference type="RefSeq" id="WP_001136253.1">
    <property type="nucleotide sequence ID" value="NZ_WPGW01000010.1"/>
</dbReference>
<dbReference type="SMR" id="Q83J78"/>
<dbReference type="STRING" id="198214.SF3497"/>
<dbReference type="PaxDb" id="198214-SF3497"/>
<dbReference type="GeneID" id="1026393"/>
<dbReference type="KEGG" id="sfl:SF3497"/>
<dbReference type="KEGG" id="sfx:S4266"/>
<dbReference type="PATRIC" id="fig|198214.7.peg.4118"/>
<dbReference type="HOGENOM" id="CLU_000604_1_23_6"/>
<dbReference type="Proteomes" id="UP000001006">
    <property type="component" value="Chromosome"/>
</dbReference>
<dbReference type="Proteomes" id="UP000002673">
    <property type="component" value="Chromosome"/>
</dbReference>
<dbReference type="GO" id="GO:0005886">
    <property type="term" value="C:plasma membrane"/>
    <property type="evidence" value="ECO:0007669"/>
    <property type="project" value="UniProtKB-SubCell"/>
</dbReference>
<dbReference type="GO" id="GO:0015413">
    <property type="term" value="F:ABC-type nickel transporter activity"/>
    <property type="evidence" value="ECO:0007669"/>
    <property type="project" value="UniProtKB-EC"/>
</dbReference>
<dbReference type="GO" id="GO:0005524">
    <property type="term" value="F:ATP binding"/>
    <property type="evidence" value="ECO:0007669"/>
    <property type="project" value="UniProtKB-KW"/>
</dbReference>
<dbReference type="GO" id="GO:0016887">
    <property type="term" value="F:ATP hydrolysis activity"/>
    <property type="evidence" value="ECO:0007669"/>
    <property type="project" value="InterPro"/>
</dbReference>
<dbReference type="GO" id="GO:0016151">
    <property type="term" value="F:nickel cation binding"/>
    <property type="evidence" value="ECO:0007669"/>
    <property type="project" value="InterPro"/>
</dbReference>
<dbReference type="CDD" id="cd03257">
    <property type="entry name" value="ABC_NikE_OppD_transporters"/>
    <property type="match status" value="1"/>
</dbReference>
<dbReference type="FunFam" id="3.40.50.300:FF:000858">
    <property type="entry name" value="Nickel import ATP-binding protein NikD"/>
    <property type="match status" value="1"/>
</dbReference>
<dbReference type="Gene3D" id="3.40.50.300">
    <property type="entry name" value="P-loop containing nucleotide triphosphate hydrolases"/>
    <property type="match status" value="1"/>
</dbReference>
<dbReference type="InterPro" id="IPR003593">
    <property type="entry name" value="AAA+_ATPase"/>
</dbReference>
<dbReference type="InterPro" id="IPR050388">
    <property type="entry name" value="ABC_Ni/Peptide_Import"/>
</dbReference>
<dbReference type="InterPro" id="IPR003439">
    <property type="entry name" value="ABC_transporter-like_ATP-bd"/>
</dbReference>
<dbReference type="InterPro" id="IPR017871">
    <property type="entry name" value="ABC_transporter-like_CS"/>
</dbReference>
<dbReference type="InterPro" id="IPR014138">
    <property type="entry name" value="Nickel_NikD"/>
</dbReference>
<dbReference type="InterPro" id="IPR027417">
    <property type="entry name" value="P-loop_NTPase"/>
</dbReference>
<dbReference type="NCBIfam" id="TIGR02770">
    <property type="entry name" value="nickel_nikD"/>
    <property type="match status" value="1"/>
</dbReference>
<dbReference type="PANTHER" id="PTHR43297:SF2">
    <property type="entry name" value="DIPEPTIDE TRANSPORT ATP-BINDING PROTEIN DPPD"/>
    <property type="match status" value="1"/>
</dbReference>
<dbReference type="PANTHER" id="PTHR43297">
    <property type="entry name" value="OLIGOPEPTIDE TRANSPORT ATP-BINDING PROTEIN APPD"/>
    <property type="match status" value="1"/>
</dbReference>
<dbReference type="Pfam" id="PF00005">
    <property type="entry name" value="ABC_tran"/>
    <property type="match status" value="1"/>
</dbReference>
<dbReference type="SMART" id="SM00382">
    <property type="entry name" value="AAA"/>
    <property type="match status" value="1"/>
</dbReference>
<dbReference type="SUPFAM" id="SSF52540">
    <property type="entry name" value="P-loop containing nucleoside triphosphate hydrolases"/>
    <property type="match status" value="1"/>
</dbReference>
<dbReference type="PROSITE" id="PS00211">
    <property type="entry name" value="ABC_TRANSPORTER_1"/>
    <property type="match status" value="1"/>
</dbReference>
<dbReference type="PROSITE" id="PS50893">
    <property type="entry name" value="ABC_TRANSPORTER_2"/>
    <property type="match status" value="1"/>
</dbReference>
<dbReference type="PROSITE" id="PS51247">
    <property type="entry name" value="NIKD"/>
    <property type="match status" value="1"/>
</dbReference>
<reference key="1">
    <citation type="journal article" date="2002" name="Nucleic Acids Res.">
        <title>Genome sequence of Shigella flexneri 2a: insights into pathogenicity through comparison with genomes of Escherichia coli K12 and O157.</title>
        <authorList>
            <person name="Jin Q."/>
            <person name="Yuan Z."/>
            <person name="Xu J."/>
            <person name="Wang Y."/>
            <person name="Shen Y."/>
            <person name="Lu W."/>
            <person name="Wang J."/>
            <person name="Liu H."/>
            <person name="Yang J."/>
            <person name="Yang F."/>
            <person name="Zhang X."/>
            <person name="Zhang J."/>
            <person name="Yang G."/>
            <person name="Wu H."/>
            <person name="Qu D."/>
            <person name="Dong J."/>
            <person name="Sun L."/>
            <person name="Xue Y."/>
            <person name="Zhao A."/>
            <person name="Gao Y."/>
            <person name="Zhu J."/>
            <person name="Kan B."/>
            <person name="Ding K."/>
            <person name="Chen S."/>
            <person name="Cheng H."/>
            <person name="Yao Z."/>
            <person name="He B."/>
            <person name="Chen R."/>
            <person name="Ma D."/>
            <person name="Qiang B."/>
            <person name="Wen Y."/>
            <person name="Hou Y."/>
            <person name="Yu J."/>
        </authorList>
    </citation>
    <scope>NUCLEOTIDE SEQUENCE [LARGE SCALE GENOMIC DNA]</scope>
    <source>
        <strain>301 / Serotype 2a</strain>
    </source>
</reference>
<reference key="2">
    <citation type="journal article" date="2003" name="Infect. Immun.">
        <title>Complete genome sequence and comparative genomics of Shigella flexneri serotype 2a strain 2457T.</title>
        <authorList>
            <person name="Wei J."/>
            <person name="Goldberg M.B."/>
            <person name="Burland V."/>
            <person name="Venkatesan M.M."/>
            <person name="Deng W."/>
            <person name="Fournier G."/>
            <person name="Mayhew G.F."/>
            <person name="Plunkett G. III"/>
            <person name="Rose D.J."/>
            <person name="Darling A."/>
            <person name="Mau B."/>
            <person name="Perna N.T."/>
            <person name="Payne S.M."/>
            <person name="Runyen-Janecky L.J."/>
            <person name="Zhou S."/>
            <person name="Schwartz D.C."/>
            <person name="Blattner F.R."/>
        </authorList>
    </citation>
    <scope>NUCLEOTIDE SEQUENCE [LARGE SCALE GENOMIC DNA]</scope>
    <source>
        <strain>ATCC 700930 / 2457T / Serotype 2a</strain>
    </source>
</reference>
<proteinExistence type="inferred from homology"/>
<name>NIKD_SHIFL</name>
<keyword id="KW-0067">ATP-binding</keyword>
<keyword id="KW-0997">Cell inner membrane</keyword>
<keyword id="KW-1003">Cell membrane</keyword>
<keyword id="KW-0406">Ion transport</keyword>
<keyword id="KW-0472">Membrane</keyword>
<keyword id="KW-0533">Nickel</keyword>
<keyword id="KW-0921">Nickel transport</keyword>
<keyword id="KW-0547">Nucleotide-binding</keyword>
<keyword id="KW-1185">Reference proteome</keyword>
<keyword id="KW-1278">Translocase</keyword>
<keyword id="KW-0813">Transport</keyword>
<protein>
    <recommendedName>
        <fullName evidence="1">Nickel import ATP-binding protein NikD</fullName>
        <ecNumber evidence="1">7.2.2.11</ecNumber>
    </recommendedName>
</protein>
<feature type="chain" id="PRO_0000092624" description="Nickel import ATP-binding protein NikD">
    <location>
        <begin position="1"/>
        <end position="254"/>
    </location>
</feature>
<feature type="domain" description="ABC transporter" evidence="1">
    <location>
        <begin position="2"/>
        <end position="241"/>
    </location>
</feature>
<feature type="binding site" evidence="1">
    <location>
        <begin position="36"/>
        <end position="43"/>
    </location>
    <ligand>
        <name>ATP</name>
        <dbReference type="ChEBI" id="CHEBI:30616"/>
    </ligand>
</feature>
<sequence>MPQQIELRNITLQAAQPLVHGVSLTLQRGRVLALVGGSGSGKSLTCAATLGILPAGVRQTAGEILADGKPVSPYALRGIKIATIMQNPRSAFNPLHTMHTHARETCLALGKPADDATLTAAIEAVGLENAARVLKLYPFEMSGGMLQRMMIAMAVLCESPFIIADEPTTDLDVVAQARILDLLESIMQKQAPGMLLVTHDMGVVARLADDVAVMSQGKIVEQGDVETLFNAPKHTVTRSLVSAHLALYGMELAS</sequence>